<gene>
    <name type="primary">TGM6</name>
    <name type="synonym">TGM3L</name>
</gene>
<protein>
    <recommendedName>
        <fullName>Protein-glutamine gamma-glutamyltransferase 6</fullName>
        <ecNumber>2.3.2.13</ecNumber>
    </recommendedName>
    <alternativeName>
        <fullName>Transglutaminase Y</fullName>
        <shortName>TGY</shortName>
        <shortName>TGase Y</shortName>
    </alternativeName>
    <alternativeName>
        <fullName>Transglutaminase-3-like</fullName>
        <shortName>TGase-3-like</shortName>
    </alternativeName>
    <alternativeName>
        <fullName>Transglutaminase-6</fullName>
        <shortName>TG6</shortName>
        <shortName>TGase-6</shortName>
    </alternativeName>
</protein>
<organism>
    <name type="scientific">Homo sapiens</name>
    <name type="common">Human</name>
    <dbReference type="NCBI Taxonomy" id="9606"/>
    <lineage>
        <taxon>Eukaryota</taxon>
        <taxon>Metazoa</taxon>
        <taxon>Chordata</taxon>
        <taxon>Craniata</taxon>
        <taxon>Vertebrata</taxon>
        <taxon>Euteleostomi</taxon>
        <taxon>Mammalia</taxon>
        <taxon>Eutheria</taxon>
        <taxon>Euarchontoglires</taxon>
        <taxon>Primates</taxon>
        <taxon>Haplorrhini</taxon>
        <taxon>Catarrhini</taxon>
        <taxon>Hominidae</taxon>
        <taxon>Homo</taxon>
    </lineage>
</organism>
<evidence type="ECO:0000250" key="1"/>
<evidence type="ECO:0000255" key="2"/>
<evidence type="ECO:0000255" key="3">
    <source>
        <dbReference type="PROSITE-ProRule" id="PRU10024"/>
    </source>
</evidence>
<evidence type="ECO:0000269" key="4">
    <source>
    </source>
</evidence>
<evidence type="ECO:0000269" key="5">
    <source>
    </source>
</evidence>
<evidence type="ECO:0000269" key="6">
    <source>
    </source>
</evidence>
<evidence type="ECO:0000269" key="7">
    <source>
    </source>
</evidence>
<evidence type="ECO:0000269" key="8">
    <source>
    </source>
</evidence>
<evidence type="ECO:0000269" key="9">
    <source ref="1"/>
</evidence>
<evidence type="ECO:0000303" key="10">
    <source ref="1"/>
</evidence>
<evidence type="ECO:0000305" key="11"/>
<comment type="function">
    <text evidence="1">Catalyzes the cross-linking of proteins and the conjugation of polyamines to proteins.</text>
</comment>
<comment type="catalytic activity">
    <reaction evidence="3">
        <text>L-glutaminyl-[protein] + L-lysyl-[protein] = [protein]-L-lysyl-N(6)-5-L-glutamyl-[protein] + NH4(+)</text>
        <dbReference type="Rhea" id="RHEA:54816"/>
        <dbReference type="Rhea" id="RHEA-COMP:9752"/>
        <dbReference type="Rhea" id="RHEA-COMP:10207"/>
        <dbReference type="Rhea" id="RHEA-COMP:14005"/>
        <dbReference type="ChEBI" id="CHEBI:28938"/>
        <dbReference type="ChEBI" id="CHEBI:29969"/>
        <dbReference type="ChEBI" id="CHEBI:30011"/>
        <dbReference type="ChEBI" id="CHEBI:138370"/>
        <dbReference type="EC" id="2.3.2.13"/>
    </reaction>
</comment>
<comment type="cofactor">
    <cofactor evidence="1">
        <name>Ca(2+)</name>
        <dbReference type="ChEBI" id="CHEBI:29108"/>
    </cofactor>
    <text evidence="1">Binds up to 3 Ca(2+) cations per subunit.</text>
</comment>
<comment type="subcellular location">
    <subcellularLocation>
        <location evidence="6 7 8">Cytoplasm</location>
    </subcellularLocation>
</comment>
<comment type="alternative products">
    <event type="alternative splicing"/>
    <isoform>
        <id>O95932-1</id>
        <name>1</name>
        <name>Long</name>
        <sequence type="displayed"/>
    </isoform>
    <isoform>
        <id>O95932-2</id>
        <name>2</name>
        <name>Short</name>
        <sequence type="described" ref="VSP_015103 VSP_015104"/>
    </isoform>
</comment>
<comment type="disease" evidence="4 5 6 7 8">
    <disease id="DI-03054">
        <name>Spinocerebellar ataxia 35</name>
        <acronym>SCA35</acronym>
        <description>A form of spinocerebellar ataxia, a clinically and genetically heterogeneous group of cerebellar disorders. Patients show progressive incoordination of gait and often poor coordination of hands, speech and eye movements, due to degeneration of the cerebellum with variable involvement of the brainstem and spinal cord. SCA35 patients commonly show upper limb involvement and torticollis. There is no cognitive impairment.</description>
        <dbReference type="MIM" id="613908"/>
    </disease>
    <text>The disease is caused by variants affecting the gene represented in this entry.</text>
</comment>
<comment type="similarity">
    <text evidence="11">Belongs to the transglutaminase superfamily. Transglutaminase family.</text>
</comment>
<proteinExistence type="evidence at protein level"/>
<reference key="1">
    <citation type="submission" date="2002-08" db="EMBL/GenBank/DDBJ databases">
        <title>A novel transglutaminase expressed in the nervous system.</title>
        <authorList>
            <person name="Thomas H."/>
            <person name="Aeschlimann D."/>
        </authorList>
    </citation>
    <scope>NUCLEOTIDE SEQUENCE [MRNA] (ISOFORMS 1 AND 2)</scope>
    <scope>VARIANT VAL-58</scope>
    <source>
        <tissue>Lung</tissue>
    </source>
</reference>
<reference key="2">
    <citation type="journal article" date="2001" name="Nature">
        <title>The DNA sequence and comparative analysis of human chromosome 20.</title>
        <authorList>
            <person name="Deloukas P."/>
            <person name="Matthews L.H."/>
            <person name="Ashurst J.L."/>
            <person name="Burton J."/>
            <person name="Gilbert J.G.R."/>
            <person name="Jones M."/>
            <person name="Stavrides G."/>
            <person name="Almeida J.P."/>
            <person name="Babbage A.K."/>
            <person name="Bagguley C.L."/>
            <person name="Bailey J."/>
            <person name="Barlow K.F."/>
            <person name="Bates K.N."/>
            <person name="Beard L.M."/>
            <person name="Beare D.M."/>
            <person name="Beasley O.P."/>
            <person name="Bird C.P."/>
            <person name="Blakey S.E."/>
            <person name="Bridgeman A.M."/>
            <person name="Brown A.J."/>
            <person name="Buck D."/>
            <person name="Burrill W.D."/>
            <person name="Butler A.P."/>
            <person name="Carder C."/>
            <person name="Carter N.P."/>
            <person name="Chapman J.C."/>
            <person name="Clamp M."/>
            <person name="Clark G."/>
            <person name="Clark L.N."/>
            <person name="Clark S.Y."/>
            <person name="Clee C.M."/>
            <person name="Clegg S."/>
            <person name="Cobley V.E."/>
            <person name="Collier R.E."/>
            <person name="Connor R.E."/>
            <person name="Corby N.R."/>
            <person name="Coulson A."/>
            <person name="Coville G.J."/>
            <person name="Deadman R."/>
            <person name="Dhami P.D."/>
            <person name="Dunn M."/>
            <person name="Ellington A.G."/>
            <person name="Frankland J.A."/>
            <person name="Fraser A."/>
            <person name="French L."/>
            <person name="Garner P."/>
            <person name="Grafham D.V."/>
            <person name="Griffiths C."/>
            <person name="Griffiths M.N.D."/>
            <person name="Gwilliam R."/>
            <person name="Hall R.E."/>
            <person name="Hammond S."/>
            <person name="Harley J.L."/>
            <person name="Heath P.D."/>
            <person name="Ho S."/>
            <person name="Holden J.L."/>
            <person name="Howden P.J."/>
            <person name="Huckle E."/>
            <person name="Hunt A.R."/>
            <person name="Hunt S.E."/>
            <person name="Jekosch K."/>
            <person name="Johnson C.M."/>
            <person name="Johnson D."/>
            <person name="Kay M.P."/>
            <person name="Kimberley A.M."/>
            <person name="King A."/>
            <person name="Knights A."/>
            <person name="Laird G.K."/>
            <person name="Lawlor S."/>
            <person name="Lehvaeslaiho M.H."/>
            <person name="Leversha M.A."/>
            <person name="Lloyd C."/>
            <person name="Lloyd D.M."/>
            <person name="Lovell J.D."/>
            <person name="Marsh V.L."/>
            <person name="Martin S.L."/>
            <person name="McConnachie L.J."/>
            <person name="McLay K."/>
            <person name="McMurray A.A."/>
            <person name="Milne S.A."/>
            <person name="Mistry D."/>
            <person name="Moore M.J.F."/>
            <person name="Mullikin J.C."/>
            <person name="Nickerson T."/>
            <person name="Oliver K."/>
            <person name="Parker A."/>
            <person name="Patel R."/>
            <person name="Pearce T.A.V."/>
            <person name="Peck A.I."/>
            <person name="Phillimore B.J.C.T."/>
            <person name="Prathalingam S.R."/>
            <person name="Plumb R.W."/>
            <person name="Ramsay H."/>
            <person name="Rice C.M."/>
            <person name="Ross M.T."/>
            <person name="Scott C.E."/>
            <person name="Sehra H.K."/>
            <person name="Shownkeen R."/>
            <person name="Sims S."/>
            <person name="Skuce C.D."/>
            <person name="Smith M.L."/>
            <person name="Soderlund C."/>
            <person name="Steward C.A."/>
            <person name="Sulston J.E."/>
            <person name="Swann R.M."/>
            <person name="Sycamore N."/>
            <person name="Taylor R."/>
            <person name="Tee L."/>
            <person name="Thomas D.W."/>
            <person name="Thorpe A."/>
            <person name="Tracey A."/>
            <person name="Tromans A.C."/>
            <person name="Vaudin M."/>
            <person name="Wall M."/>
            <person name="Wallis J.M."/>
            <person name="Whitehead S.L."/>
            <person name="Whittaker P."/>
            <person name="Willey D.L."/>
            <person name="Williams L."/>
            <person name="Williams S.A."/>
            <person name="Wilming L."/>
            <person name="Wray P.W."/>
            <person name="Hubbard T."/>
            <person name="Durbin R.M."/>
            <person name="Bentley D.R."/>
            <person name="Beck S."/>
            <person name="Rogers J."/>
        </authorList>
    </citation>
    <scope>NUCLEOTIDE SEQUENCE [LARGE SCALE GENOMIC DNA]</scope>
</reference>
<reference key="3">
    <citation type="journal article" date="2010" name="Brain">
        <title>TGM6 identified as a novel causative gene of spinocerebellar ataxias using exome sequencing.</title>
        <authorList>
            <person name="Wang J.L."/>
            <person name="Yang X."/>
            <person name="Xia K."/>
            <person name="Hu Z.M."/>
            <person name="Weng L."/>
            <person name="Jin X."/>
            <person name="Jiang H."/>
            <person name="Zhang P."/>
            <person name="Shen L."/>
            <person name="Guo J.F."/>
            <person name="Li N."/>
            <person name="Li Y.R."/>
            <person name="Lei L.F."/>
            <person name="Zhou J."/>
            <person name="Du J."/>
            <person name="Zhou Y.F."/>
            <person name="Pan Q."/>
            <person name="Wang J."/>
            <person name="Wang J."/>
            <person name="Li R.Q."/>
            <person name="Tang B.S."/>
        </authorList>
    </citation>
    <scope>VARIANTS SCA35 GLY-327 AND TRP-517</scope>
</reference>
<reference key="4">
    <citation type="journal article" date="2013" name="Biochem. Biophys. Res. Commun.">
        <title>Spinocerebellar ataxia type 35 (SCA35)-associated transglutaminase 6 mutants sensitize cells to apoptosis.</title>
        <authorList>
            <person name="Guan W.J."/>
            <person name="Wang J.L."/>
            <person name="Liu Y.T."/>
            <person name="Ma Y.T."/>
            <person name="Zhou Y."/>
            <person name="Jiang H."/>
            <person name="Shen L."/>
            <person name="Guo J.F."/>
            <person name="Xia K."/>
            <person name="Li J.D."/>
            <person name="Tang B.S."/>
        </authorList>
    </citation>
    <scope>SUBCELLULAR LOCATION</scope>
    <scope>CHARACTERIZATION OF VARIANTS SCA35 GLY-327 AND TRP-517</scope>
</reference>
<reference key="5">
    <citation type="journal article" date="2013" name="Clin. Genet.">
        <title>Whole exome sequencing identifies a novel mutation in the transglutaminase 6 gene for spinocerebellar ataxia in a Chinese family.</title>
        <authorList>
            <person name="Li M."/>
            <person name="Pang S.Y."/>
            <person name="Song Y."/>
            <person name="Kung M.H."/>
            <person name="Ho S.L."/>
            <person name="Sham P.C."/>
        </authorList>
    </citation>
    <scope>VARIANT SCA35 HIS-510</scope>
</reference>
<reference key="6">
    <citation type="journal article" date="2017" name="Brain">
        <title>Exome sequencing and network analysis identifies shared mechanisms underlying spinocerebellar ataxia.</title>
        <authorList>
            <person name="Nibbeling E.A.R."/>
            <person name="Duarri A."/>
            <person name="Verschuuren-Bemelmans C.C."/>
            <person name="Fokkens M.R."/>
            <person name="Karjalainen J.M."/>
            <person name="Smeets C.J.L.M."/>
            <person name="de Boer-Bergsma J.J."/>
            <person name="van der Vries G."/>
            <person name="Dooijes D."/>
            <person name="Bampi G.B."/>
            <person name="van Diemen C."/>
            <person name="Brunt E."/>
            <person name="Ippel E."/>
            <person name="Kremer B."/>
            <person name="Vlak M."/>
            <person name="Adir N."/>
            <person name="Wijmenga C."/>
            <person name="van de Warrenburg B.P.C."/>
            <person name="Franke L."/>
            <person name="Sinke R.J."/>
            <person name="Verbeek D.S."/>
        </authorList>
    </citation>
    <scope>SUBCELLULAR LOCATION</scope>
    <scope>VARIANT SCA35 ASN-426</scope>
    <scope>CHARACTERIZATION OF VARIANT SCA35 ASN-426</scope>
</reference>
<reference key="7">
    <citation type="journal article" date="2014" name="Neurology">
        <title>Spinocerebellar ataxia 35: Novel mutations in TGM6 with clinical and genetic characterization.</title>
        <authorList>
            <person name="Guo Y.C."/>
            <person name="Lin J.J."/>
            <person name="Liao Y.C."/>
            <person name="Tsai P.C."/>
            <person name="Lee Y.C."/>
            <person name="Soong B.W."/>
        </authorList>
    </citation>
    <scope>VARIANTS SCA35 CYS-111; HIS-510 AND GLU-574 DEL</scope>
    <scope>CHARACTERIZATION OF VARIANTS SCA35 CYS-111; HIS-510 AND GLU-574 DEL</scope>
    <scope>SUBCELLULAR LOCATION</scope>
</reference>
<name>TGM3L_HUMAN</name>
<feature type="chain" id="PRO_0000213715" description="Protein-glutamine gamma-glutamyltransferase 6">
    <location>
        <begin position="1"/>
        <end position="706"/>
    </location>
</feature>
<feature type="active site" evidence="3">
    <location>
        <position position="274"/>
    </location>
</feature>
<feature type="active site" evidence="3">
    <location>
        <position position="333"/>
    </location>
</feature>
<feature type="active site" evidence="3">
    <location>
        <position position="356"/>
    </location>
</feature>
<feature type="binding site" evidence="2">
    <location>
        <position position="223"/>
    </location>
    <ligand>
        <name>Ca(2+)</name>
        <dbReference type="ChEBI" id="CHEBI:29108"/>
        <label>1</label>
    </ligand>
</feature>
<feature type="binding site" evidence="2">
    <location>
        <position position="226"/>
    </location>
    <ligand>
        <name>Ca(2+)</name>
        <dbReference type="ChEBI" id="CHEBI:29108"/>
        <label>1</label>
    </ligand>
</feature>
<feature type="binding site" evidence="2">
    <location>
        <position position="228"/>
    </location>
    <ligand>
        <name>Ca(2+)</name>
        <dbReference type="ChEBI" id="CHEBI:29108"/>
        <label>1</label>
    </ligand>
</feature>
<feature type="binding site" evidence="1">
    <location>
        <position position="303"/>
    </location>
    <ligand>
        <name>Ca(2+)</name>
        <dbReference type="ChEBI" id="CHEBI:29108"/>
        <label>2</label>
    </ligand>
</feature>
<feature type="binding site" evidence="1">
    <location>
        <position position="305"/>
    </location>
    <ligand>
        <name>Ca(2+)</name>
        <dbReference type="ChEBI" id="CHEBI:29108"/>
        <label>2</label>
    </ligand>
</feature>
<feature type="binding site" evidence="1">
    <location>
        <position position="307"/>
    </location>
    <ligand>
        <name>Ca(2+)</name>
        <dbReference type="ChEBI" id="CHEBI:29108"/>
        <label>2</label>
    </ligand>
</feature>
<feature type="binding site" evidence="1">
    <location>
        <position position="309"/>
    </location>
    <ligand>
        <name>Ca(2+)</name>
        <dbReference type="ChEBI" id="CHEBI:29108"/>
        <label>2</label>
    </ligand>
</feature>
<feature type="binding site" evidence="1">
    <location>
        <position position="327"/>
    </location>
    <ligand>
        <name>Ca(2+)</name>
        <dbReference type="ChEBI" id="CHEBI:29108"/>
        <label>2</label>
    </ligand>
</feature>
<feature type="binding site" evidence="1">
    <location>
        <position position="396"/>
    </location>
    <ligand>
        <name>Ca(2+)</name>
        <dbReference type="ChEBI" id="CHEBI:29108"/>
        <label>3</label>
    </ligand>
</feature>
<feature type="binding site" evidence="1">
    <location>
        <position position="417"/>
    </location>
    <ligand>
        <name>Ca(2+)</name>
        <dbReference type="ChEBI" id="CHEBI:29108"/>
        <label>3</label>
    </ligand>
</feature>
<feature type="binding site" evidence="1">
    <location>
        <position position="445"/>
    </location>
    <ligand>
        <name>Ca(2+)</name>
        <dbReference type="ChEBI" id="CHEBI:29108"/>
        <label>3</label>
    </ligand>
</feature>
<feature type="binding site" evidence="1">
    <location>
        <position position="450"/>
    </location>
    <ligand>
        <name>Ca(2+)</name>
        <dbReference type="ChEBI" id="CHEBI:29108"/>
        <label>3</label>
    </ligand>
</feature>
<feature type="splice variant" id="VSP_015103" description="In isoform 2." evidence="10">
    <original>VLGPAMVGVAVTVE</original>
    <variation>RAYPGASGEGLSPV</variation>
    <location>
        <begin position="612"/>
        <end position="625"/>
    </location>
</feature>
<feature type="splice variant" id="VSP_015104" description="In isoform 2." evidence="10">
    <location>
        <begin position="626"/>
        <end position="706"/>
    </location>
</feature>
<feature type="sequence variant" id="VAR_013250" description="In dbSNP:rs2076405." evidence="9">
    <original>M</original>
    <variation>V</variation>
    <location>
        <position position="58"/>
    </location>
</feature>
<feature type="sequence variant" id="VAR_072179" description="In SCA35; impairs transglutaminase activity; dbSNP:rs372250159." evidence="7">
    <original>R</original>
    <variation>C</variation>
    <location>
        <position position="111"/>
    </location>
</feature>
<feature type="sequence variant" id="VAR_065360" description="In SCA35; decreased transglutaminase activity; decreased protein stability; dbSNP:rs387907098." evidence="4 6">
    <original>D</original>
    <variation>G</variation>
    <location>
        <position position="327"/>
    </location>
</feature>
<feature type="sequence variant" id="VAR_080737" description="In SCA35; decreased protein stability." evidence="8">
    <original>T</original>
    <variation>N</variation>
    <location>
        <position position="426"/>
    </location>
</feature>
<feature type="sequence variant" id="VAR_072180" description="In SCA35; impairs transglutaminase activity; dbSNP:rs201964784." evidence="5 7">
    <original>D</original>
    <variation>H</variation>
    <location>
        <position position="510"/>
    </location>
</feature>
<feature type="sequence variant" id="VAR_065361" description="In SCA35; decreased transglutaminase activity; decreased protein stability; dbSNP:rs387907097." evidence="4 6">
    <original>L</original>
    <variation>W</variation>
    <location>
        <position position="517"/>
    </location>
</feature>
<feature type="sequence variant" id="VAR_072181" description="In SCA35; impairs transglutaminase activity." evidence="7">
    <location>
        <position position="574"/>
    </location>
</feature>
<accession>O95932</accession>
<accession>Q5JXU4</accession>
<accession>Q5JXU5</accession>
<accession>Q719M2</accession>
<accession>Q719M3</accession>
<accession>Q9Y4U8</accession>
<dbReference type="EC" id="2.3.2.13"/>
<dbReference type="EMBL" id="AF540969">
    <property type="protein sequence ID" value="AAQ10751.1"/>
    <property type="molecule type" value="mRNA"/>
</dbReference>
<dbReference type="EMBL" id="AF540970">
    <property type="protein sequence ID" value="AAQ10752.1"/>
    <property type="molecule type" value="mRNA"/>
</dbReference>
<dbReference type="EMBL" id="AL049650">
    <property type="status" value="NOT_ANNOTATED_CDS"/>
    <property type="molecule type" value="Genomic_DNA"/>
</dbReference>
<dbReference type="EMBL" id="AL031678">
    <property type="status" value="NOT_ANNOTATED_CDS"/>
    <property type="molecule type" value="Genomic_DNA"/>
</dbReference>
<dbReference type="CCDS" id="CCDS13025.1">
    <molecule id="O95932-1"/>
</dbReference>
<dbReference type="CCDS" id="CCDS58761.1">
    <molecule id="O95932-2"/>
</dbReference>
<dbReference type="RefSeq" id="NP_001241663.1">
    <molecule id="O95932-2"/>
    <property type="nucleotide sequence ID" value="NM_001254734.2"/>
</dbReference>
<dbReference type="RefSeq" id="NP_945345.2">
    <molecule id="O95932-1"/>
    <property type="nucleotide sequence ID" value="NM_198994.3"/>
</dbReference>
<dbReference type="SMR" id="O95932"/>
<dbReference type="BioGRID" id="131269">
    <property type="interactions" value="1"/>
</dbReference>
<dbReference type="FunCoup" id="O95932">
    <property type="interactions" value="190"/>
</dbReference>
<dbReference type="IntAct" id="O95932">
    <property type="interactions" value="1"/>
</dbReference>
<dbReference type="STRING" id="9606.ENSP00000202625"/>
<dbReference type="BindingDB" id="O95932"/>
<dbReference type="ChEMBL" id="CHEMBL2079852"/>
<dbReference type="DrugBank" id="DB00130">
    <property type="generic name" value="L-Glutamine"/>
</dbReference>
<dbReference type="DrugBank" id="DB01956">
    <property type="generic name" value="Taurine"/>
</dbReference>
<dbReference type="GlyGen" id="O95932">
    <property type="glycosylation" value="1 site, 1 O-linked glycan (1 site)"/>
</dbReference>
<dbReference type="iPTMnet" id="O95932"/>
<dbReference type="PhosphoSitePlus" id="O95932"/>
<dbReference type="BioMuta" id="TGM6"/>
<dbReference type="PaxDb" id="9606-ENSP00000202625"/>
<dbReference type="PeptideAtlas" id="O95932"/>
<dbReference type="ProteomicsDB" id="51132">
    <molecule id="O95932-1"/>
</dbReference>
<dbReference type="ProteomicsDB" id="51133">
    <molecule id="O95932-2"/>
</dbReference>
<dbReference type="TopDownProteomics" id="O95932-1">
    <molecule id="O95932-1"/>
</dbReference>
<dbReference type="Antibodypedia" id="23168">
    <property type="antibodies" value="63 antibodies from 21 providers"/>
</dbReference>
<dbReference type="DNASU" id="343641"/>
<dbReference type="Ensembl" id="ENST00000202625.7">
    <molecule id="O95932-1"/>
    <property type="protein sequence ID" value="ENSP00000202625.2"/>
    <property type="gene ID" value="ENSG00000166948.10"/>
</dbReference>
<dbReference type="Ensembl" id="ENST00000381423.1">
    <molecule id="O95932-2"/>
    <property type="protein sequence ID" value="ENSP00000370831.1"/>
    <property type="gene ID" value="ENSG00000166948.10"/>
</dbReference>
<dbReference type="GeneID" id="343641"/>
<dbReference type="KEGG" id="hsa:343641"/>
<dbReference type="MANE-Select" id="ENST00000202625.7">
    <property type="protein sequence ID" value="ENSP00000202625.2"/>
    <property type="RefSeq nucleotide sequence ID" value="NM_198994.3"/>
    <property type="RefSeq protein sequence ID" value="NP_945345.2"/>
</dbReference>
<dbReference type="UCSC" id="uc002wfy.1">
    <molecule id="O95932-1"/>
    <property type="organism name" value="human"/>
</dbReference>
<dbReference type="AGR" id="HGNC:16255"/>
<dbReference type="CTD" id="343641"/>
<dbReference type="DisGeNET" id="343641"/>
<dbReference type="GeneCards" id="TGM6"/>
<dbReference type="HGNC" id="HGNC:16255">
    <property type="gene designation" value="TGM6"/>
</dbReference>
<dbReference type="HPA" id="ENSG00000166948">
    <property type="expression patterns" value="Not detected"/>
</dbReference>
<dbReference type="MalaCards" id="TGM6"/>
<dbReference type="MIM" id="613900">
    <property type="type" value="gene"/>
</dbReference>
<dbReference type="MIM" id="613908">
    <property type="type" value="phenotype"/>
</dbReference>
<dbReference type="neXtProt" id="NX_O95932"/>
<dbReference type="OpenTargets" id="ENSG00000166948"/>
<dbReference type="Orphanet" id="319465">
    <property type="disease" value="Inherited acute myeloid leukemia"/>
</dbReference>
<dbReference type="Orphanet" id="276193">
    <property type="disease" value="Spinocerebellar ataxia type 35"/>
</dbReference>
<dbReference type="PharmGKB" id="PA38098"/>
<dbReference type="VEuPathDB" id="HostDB:ENSG00000166948"/>
<dbReference type="eggNOG" id="ENOG502QVH4">
    <property type="taxonomic scope" value="Eukaryota"/>
</dbReference>
<dbReference type="GeneTree" id="ENSGT01050000244866"/>
<dbReference type="HOGENOM" id="CLU_013435_2_2_1"/>
<dbReference type="InParanoid" id="O95932"/>
<dbReference type="OMA" id="RVKDCVL"/>
<dbReference type="OrthoDB" id="437511at2759"/>
<dbReference type="PAN-GO" id="O95932">
    <property type="GO annotations" value="3 GO annotations based on evolutionary models"/>
</dbReference>
<dbReference type="PhylomeDB" id="O95932"/>
<dbReference type="TreeFam" id="TF324278"/>
<dbReference type="BRENDA" id="2.3.2.13">
    <property type="organism ID" value="2681"/>
</dbReference>
<dbReference type="PathwayCommons" id="O95932"/>
<dbReference type="SignaLink" id="O95932"/>
<dbReference type="BioGRID-ORCS" id="343641">
    <property type="hits" value="7 hits in 1140 CRISPR screens"/>
</dbReference>
<dbReference type="ChiTaRS" id="TGM6">
    <property type="organism name" value="human"/>
</dbReference>
<dbReference type="GenomeRNAi" id="343641"/>
<dbReference type="Pharos" id="O95932">
    <property type="development level" value="Tchem"/>
</dbReference>
<dbReference type="PRO" id="PR:O95932"/>
<dbReference type="Proteomes" id="UP000005640">
    <property type="component" value="Chromosome 20"/>
</dbReference>
<dbReference type="RNAct" id="O95932">
    <property type="molecule type" value="protein"/>
</dbReference>
<dbReference type="Bgee" id="ENSG00000166948">
    <property type="expression patterns" value="Expressed in colonic epithelium and 37 other cell types or tissues"/>
</dbReference>
<dbReference type="GO" id="GO:0005737">
    <property type="term" value="C:cytoplasm"/>
    <property type="evidence" value="ECO:0000314"/>
    <property type="project" value="UniProtKB"/>
</dbReference>
<dbReference type="GO" id="GO:0046872">
    <property type="term" value="F:metal ion binding"/>
    <property type="evidence" value="ECO:0007669"/>
    <property type="project" value="UniProtKB-KW"/>
</dbReference>
<dbReference type="GO" id="GO:0003810">
    <property type="term" value="F:protein-glutamine gamma-glutamyltransferase activity"/>
    <property type="evidence" value="ECO:0000314"/>
    <property type="project" value="MGI"/>
</dbReference>
<dbReference type="FunFam" id="2.60.40.10:FF:000090">
    <property type="entry name" value="Protein-glutamine gamma-glutamyltransferase 2"/>
    <property type="match status" value="1"/>
</dbReference>
<dbReference type="FunFam" id="2.60.40.10:FF:000278">
    <property type="entry name" value="Protein-glutamine gamma-glutamyltransferase 2"/>
    <property type="match status" value="1"/>
</dbReference>
<dbReference type="FunFam" id="3.90.260.10:FF:000001">
    <property type="entry name" value="Protein-glutamine gamma-glutamyltransferase 2"/>
    <property type="match status" value="1"/>
</dbReference>
<dbReference type="FunFam" id="2.60.40.10:FF:000171">
    <property type="entry name" value="protein-glutamine gamma-glutamyltransferase 6"/>
    <property type="match status" value="1"/>
</dbReference>
<dbReference type="Gene3D" id="2.60.40.10">
    <property type="entry name" value="Immunoglobulins"/>
    <property type="match status" value="3"/>
</dbReference>
<dbReference type="Gene3D" id="3.90.260.10">
    <property type="entry name" value="Transglutaminase-like"/>
    <property type="match status" value="1"/>
</dbReference>
<dbReference type="InterPro" id="IPR013783">
    <property type="entry name" value="Ig-like_fold"/>
</dbReference>
<dbReference type="InterPro" id="IPR014756">
    <property type="entry name" value="Ig_E-set"/>
</dbReference>
<dbReference type="InterPro" id="IPR038765">
    <property type="entry name" value="Papain-like_cys_pep_sf"/>
</dbReference>
<dbReference type="InterPro" id="IPR050779">
    <property type="entry name" value="Transglutaminase"/>
</dbReference>
<dbReference type="InterPro" id="IPR002931">
    <property type="entry name" value="Transglutaminase-like"/>
</dbReference>
<dbReference type="InterPro" id="IPR036985">
    <property type="entry name" value="Transglutaminase-like_sf"/>
</dbReference>
<dbReference type="InterPro" id="IPR023608">
    <property type="entry name" value="Transglutaminase_animal"/>
</dbReference>
<dbReference type="InterPro" id="IPR013808">
    <property type="entry name" value="Transglutaminase_AS"/>
</dbReference>
<dbReference type="InterPro" id="IPR008958">
    <property type="entry name" value="Transglutaminase_C"/>
</dbReference>
<dbReference type="InterPro" id="IPR036238">
    <property type="entry name" value="Transglutaminase_C_sf"/>
</dbReference>
<dbReference type="InterPro" id="IPR001102">
    <property type="entry name" value="Transglutaminase_N"/>
</dbReference>
<dbReference type="PANTHER" id="PTHR11590">
    <property type="entry name" value="PROTEIN-GLUTAMINE GAMMA-GLUTAMYLTRANSFERASE"/>
    <property type="match status" value="1"/>
</dbReference>
<dbReference type="PANTHER" id="PTHR11590:SF50">
    <property type="entry name" value="PROTEIN-GLUTAMINE GAMMA-GLUTAMYLTRANSFERASE 6"/>
    <property type="match status" value="1"/>
</dbReference>
<dbReference type="Pfam" id="PF00927">
    <property type="entry name" value="Transglut_C"/>
    <property type="match status" value="2"/>
</dbReference>
<dbReference type="Pfam" id="PF01841">
    <property type="entry name" value="Transglut_core"/>
    <property type="match status" value="1"/>
</dbReference>
<dbReference type="Pfam" id="PF00868">
    <property type="entry name" value="Transglut_N"/>
    <property type="match status" value="1"/>
</dbReference>
<dbReference type="PIRSF" id="PIRSF000459">
    <property type="entry name" value="TGM_EBP42"/>
    <property type="match status" value="1"/>
</dbReference>
<dbReference type="SMART" id="SM00460">
    <property type="entry name" value="TGc"/>
    <property type="match status" value="1"/>
</dbReference>
<dbReference type="SUPFAM" id="SSF54001">
    <property type="entry name" value="Cysteine proteinases"/>
    <property type="match status" value="1"/>
</dbReference>
<dbReference type="SUPFAM" id="SSF81296">
    <property type="entry name" value="E set domains"/>
    <property type="match status" value="1"/>
</dbReference>
<dbReference type="SUPFAM" id="SSF49309">
    <property type="entry name" value="Transglutaminase, two C-terminal domains"/>
    <property type="match status" value="2"/>
</dbReference>
<dbReference type="PROSITE" id="PS00547">
    <property type="entry name" value="TRANSGLUTAMINASES"/>
    <property type="match status" value="1"/>
</dbReference>
<sequence>MAGIRVTKVDWQRSRNGAAHHTQEYPCPELVVRRGQSFSLTLELSRALDCEEILIFTMETGPRASEALHTKAVFQTSELERGEGWTAAREAQMEKTLTVSLASPPSAVIGRYLLSIRLSSHRKHSNRRLGEFVLLFNPWCAEDDVFLASEEERQEYVLSDSGIIFRGVEKHIRAQGWNYGQFEEDILNICLSILDRSPGHQNNPATDVSCRHNPIYVTRVISAMVNSNNDRGVVQGQWQGKYGGGTSPLHWRGSVAILQKWLKGRYKPVKYGQCWVFAGVLCTVLRCLGIATRVVSNFNSAHDTDQNLSVDKYVDSFGRTLEDLTEDSMWNFHVWNESWFARQDLGPSYNGWQVLDATPQEESEGVFRCGPASVTAIREGDVHLAHDGPFVFAEVNADYITWLWHEDESRERVYSNTKKIGRCISTKAVGSDSRVDITDLYKYPEGSRKERQVYSKAVNRLFGVEASGRRIWIRRAGGRCLWRDDLLEPATKPSIAGKFKVLEPPMLGHDLRLALCLANLTSRAQRVRVNLSGATILYTRKPVAEILHESHAVRLGPQEEKRIPITISYSKYKEDLTEDKKILLAAMCLVTKGEKLLVEKDITLEDFITIKVLGPAMVGVAVTVEVTVVNPLIERVKDCALMVEGSGLLQEQLSIDVPTLEPQERASVQFDITPSKSGPRQLQVDLVSPHFPDIKGFVIVHVATAK</sequence>
<keyword id="KW-0012">Acyltransferase</keyword>
<keyword id="KW-0025">Alternative splicing</keyword>
<keyword id="KW-0106">Calcium</keyword>
<keyword id="KW-0963">Cytoplasm</keyword>
<keyword id="KW-0225">Disease variant</keyword>
<keyword id="KW-0479">Metal-binding</keyword>
<keyword id="KW-0523">Neurodegeneration</keyword>
<keyword id="KW-1185">Reference proteome</keyword>
<keyword id="KW-0950">Spinocerebellar ataxia</keyword>
<keyword id="KW-0808">Transferase</keyword>